<name>EFTU_BACC3</name>
<feature type="chain" id="PRO_1000201381" description="Elongation factor Tu">
    <location>
        <begin position="1"/>
        <end position="395"/>
    </location>
</feature>
<feature type="domain" description="tr-type G">
    <location>
        <begin position="10"/>
        <end position="204"/>
    </location>
</feature>
<feature type="region of interest" description="G1" evidence="1">
    <location>
        <begin position="19"/>
        <end position="26"/>
    </location>
</feature>
<feature type="region of interest" description="G2" evidence="1">
    <location>
        <begin position="60"/>
        <end position="64"/>
    </location>
</feature>
<feature type="region of interest" description="G3" evidence="1">
    <location>
        <begin position="81"/>
        <end position="84"/>
    </location>
</feature>
<feature type="region of interest" description="G4" evidence="1">
    <location>
        <begin position="136"/>
        <end position="139"/>
    </location>
</feature>
<feature type="region of interest" description="G5" evidence="1">
    <location>
        <begin position="174"/>
        <end position="176"/>
    </location>
</feature>
<feature type="binding site" evidence="2">
    <location>
        <begin position="19"/>
        <end position="26"/>
    </location>
    <ligand>
        <name>GTP</name>
        <dbReference type="ChEBI" id="CHEBI:37565"/>
    </ligand>
</feature>
<feature type="binding site" evidence="2">
    <location>
        <position position="26"/>
    </location>
    <ligand>
        <name>Mg(2+)</name>
        <dbReference type="ChEBI" id="CHEBI:18420"/>
    </ligand>
</feature>
<feature type="binding site" evidence="2">
    <location>
        <begin position="81"/>
        <end position="85"/>
    </location>
    <ligand>
        <name>GTP</name>
        <dbReference type="ChEBI" id="CHEBI:37565"/>
    </ligand>
</feature>
<feature type="binding site" evidence="2">
    <location>
        <begin position="136"/>
        <end position="139"/>
    </location>
    <ligand>
        <name>GTP</name>
        <dbReference type="ChEBI" id="CHEBI:37565"/>
    </ligand>
</feature>
<accession>C1ET37</accession>
<reference key="1">
    <citation type="submission" date="2009-02" db="EMBL/GenBank/DDBJ databases">
        <title>Genome sequence of Bacillus cereus 03BB102.</title>
        <authorList>
            <person name="Dodson R.J."/>
            <person name="Jackson P."/>
            <person name="Munk A.C."/>
            <person name="Brettin T."/>
            <person name="Bruce D."/>
            <person name="Detter C."/>
            <person name="Tapia R."/>
            <person name="Han C."/>
            <person name="Sutton G."/>
            <person name="Sims D."/>
        </authorList>
    </citation>
    <scope>NUCLEOTIDE SEQUENCE [LARGE SCALE GENOMIC DNA]</scope>
    <source>
        <strain>03BB102</strain>
    </source>
</reference>
<protein>
    <recommendedName>
        <fullName evidence="2">Elongation factor Tu</fullName>
        <shortName evidence="2">EF-Tu</shortName>
        <ecNumber evidence="2">3.6.5.3</ecNumber>
    </recommendedName>
</protein>
<evidence type="ECO:0000250" key="1"/>
<evidence type="ECO:0000255" key="2">
    <source>
        <dbReference type="HAMAP-Rule" id="MF_00118"/>
    </source>
</evidence>
<organism>
    <name type="scientific">Bacillus cereus (strain 03BB102)</name>
    <dbReference type="NCBI Taxonomy" id="572264"/>
    <lineage>
        <taxon>Bacteria</taxon>
        <taxon>Bacillati</taxon>
        <taxon>Bacillota</taxon>
        <taxon>Bacilli</taxon>
        <taxon>Bacillales</taxon>
        <taxon>Bacillaceae</taxon>
        <taxon>Bacillus</taxon>
        <taxon>Bacillus cereus group</taxon>
    </lineage>
</organism>
<keyword id="KW-0963">Cytoplasm</keyword>
<keyword id="KW-0251">Elongation factor</keyword>
<keyword id="KW-0342">GTP-binding</keyword>
<keyword id="KW-0378">Hydrolase</keyword>
<keyword id="KW-0460">Magnesium</keyword>
<keyword id="KW-0479">Metal-binding</keyword>
<keyword id="KW-0547">Nucleotide-binding</keyword>
<keyword id="KW-0648">Protein biosynthesis</keyword>
<gene>
    <name evidence="2" type="primary">tuf</name>
    <name type="ordered locus">BCA_0137</name>
</gene>
<dbReference type="EC" id="3.6.5.3" evidence="2"/>
<dbReference type="EMBL" id="CP001407">
    <property type="protein sequence ID" value="ACO29654.1"/>
    <property type="molecule type" value="Genomic_DNA"/>
</dbReference>
<dbReference type="RefSeq" id="WP_001029614.1">
    <property type="nucleotide sequence ID" value="NZ_CP009318.1"/>
</dbReference>
<dbReference type="SMR" id="C1ET37"/>
<dbReference type="GeneID" id="93010945"/>
<dbReference type="KEGG" id="bcx:BCA_0137"/>
<dbReference type="PATRIC" id="fig|572264.18.peg.172"/>
<dbReference type="Proteomes" id="UP000002210">
    <property type="component" value="Chromosome"/>
</dbReference>
<dbReference type="GO" id="GO:0005829">
    <property type="term" value="C:cytosol"/>
    <property type="evidence" value="ECO:0007669"/>
    <property type="project" value="TreeGrafter"/>
</dbReference>
<dbReference type="GO" id="GO:0005525">
    <property type="term" value="F:GTP binding"/>
    <property type="evidence" value="ECO:0007669"/>
    <property type="project" value="UniProtKB-UniRule"/>
</dbReference>
<dbReference type="GO" id="GO:0003924">
    <property type="term" value="F:GTPase activity"/>
    <property type="evidence" value="ECO:0007669"/>
    <property type="project" value="InterPro"/>
</dbReference>
<dbReference type="GO" id="GO:0003746">
    <property type="term" value="F:translation elongation factor activity"/>
    <property type="evidence" value="ECO:0007669"/>
    <property type="project" value="UniProtKB-UniRule"/>
</dbReference>
<dbReference type="CDD" id="cd01884">
    <property type="entry name" value="EF_Tu"/>
    <property type="match status" value="1"/>
</dbReference>
<dbReference type="CDD" id="cd03697">
    <property type="entry name" value="EFTU_II"/>
    <property type="match status" value="1"/>
</dbReference>
<dbReference type="CDD" id="cd03707">
    <property type="entry name" value="EFTU_III"/>
    <property type="match status" value="1"/>
</dbReference>
<dbReference type="FunFam" id="2.40.30.10:FF:000001">
    <property type="entry name" value="Elongation factor Tu"/>
    <property type="match status" value="1"/>
</dbReference>
<dbReference type="FunFam" id="3.40.50.300:FF:000003">
    <property type="entry name" value="Elongation factor Tu"/>
    <property type="match status" value="1"/>
</dbReference>
<dbReference type="Gene3D" id="3.40.50.300">
    <property type="entry name" value="P-loop containing nucleotide triphosphate hydrolases"/>
    <property type="match status" value="1"/>
</dbReference>
<dbReference type="Gene3D" id="2.40.30.10">
    <property type="entry name" value="Translation factors"/>
    <property type="match status" value="2"/>
</dbReference>
<dbReference type="HAMAP" id="MF_00118_B">
    <property type="entry name" value="EF_Tu_B"/>
    <property type="match status" value="1"/>
</dbReference>
<dbReference type="InterPro" id="IPR041709">
    <property type="entry name" value="EF-Tu_GTP-bd"/>
</dbReference>
<dbReference type="InterPro" id="IPR050055">
    <property type="entry name" value="EF-Tu_GTPase"/>
</dbReference>
<dbReference type="InterPro" id="IPR004161">
    <property type="entry name" value="EFTu-like_2"/>
</dbReference>
<dbReference type="InterPro" id="IPR033720">
    <property type="entry name" value="EFTU_2"/>
</dbReference>
<dbReference type="InterPro" id="IPR031157">
    <property type="entry name" value="G_TR_CS"/>
</dbReference>
<dbReference type="InterPro" id="IPR027417">
    <property type="entry name" value="P-loop_NTPase"/>
</dbReference>
<dbReference type="InterPro" id="IPR005225">
    <property type="entry name" value="Small_GTP-bd"/>
</dbReference>
<dbReference type="InterPro" id="IPR000795">
    <property type="entry name" value="T_Tr_GTP-bd_dom"/>
</dbReference>
<dbReference type="InterPro" id="IPR009000">
    <property type="entry name" value="Transl_B-barrel_sf"/>
</dbReference>
<dbReference type="InterPro" id="IPR009001">
    <property type="entry name" value="Transl_elong_EF1A/Init_IF2_C"/>
</dbReference>
<dbReference type="InterPro" id="IPR004541">
    <property type="entry name" value="Transl_elong_EFTu/EF1A_bac/org"/>
</dbReference>
<dbReference type="InterPro" id="IPR004160">
    <property type="entry name" value="Transl_elong_EFTu/EF1A_C"/>
</dbReference>
<dbReference type="NCBIfam" id="TIGR00485">
    <property type="entry name" value="EF-Tu"/>
    <property type="match status" value="1"/>
</dbReference>
<dbReference type="NCBIfam" id="NF000766">
    <property type="entry name" value="PRK00049.1"/>
    <property type="match status" value="1"/>
</dbReference>
<dbReference type="NCBIfam" id="NF009372">
    <property type="entry name" value="PRK12735.1"/>
    <property type="match status" value="1"/>
</dbReference>
<dbReference type="NCBIfam" id="NF009373">
    <property type="entry name" value="PRK12736.1"/>
    <property type="match status" value="1"/>
</dbReference>
<dbReference type="NCBIfam" id="TIGR00231">
    <property type="entry name" value="small_GTP"/>
    <property type="match status" value="1"/>
</dbReference>
<dbReference type="PANTHER" id="PTHR43721:SF22">
    <property type="entry name" value="ELONGATION FACTOR TU, MITOCHONDRIAL"/>
    <property type="match status" value="1"/>
</dbReference>
<dbReference type="PANTHER" id="PTHR43721">
    <property type="entry name" value="ELONGATION FACTOR TU-RELATED"/>
    <property type="match status" value="1"/>
</dbReference>
<dbReference type="Pfam" id="PF00009">
    <property type="entry name" value="GTP_EFTU"/>
    <property type="match status" value="1"/>
</dbReference>
<dbReference type="Pfam" id="PF03144">
    <property type="entry name" value="GTP_EFTU_D2"/>
    <property type="match status" value="1"/>
</dbReference>
<dbReference type="Pfam" id="PF03143">
    <property type="entry name" value="GTP_EFTU_D3"/>
    <property type="match status" value="1"/>
</dbReference>
<dbReference type="PRINTS" id="PR00315">
    <property type="entry name" value="ELONGATNFCT"/>
</dbReference>
<dbReference type="SUPFAM" id="SSF50465">
    <property type="entry name" value="EF-Tu/eEF-1alpha/eIF2-gamma C-terminal domain"/>
    <property type="match status" value="1"/>
</dbReference>
<dbReference type="SUPFAM" id="SSF52540">
    <property type="entry name" value="P-loop containing nucleoside triphosphate hydrolases"/>
    <property type="match status" value="1"/>
</dbReference>
<dbReference type="SUPFAM" id="SSF50447">
    <property type="entry name" value="Translation proteins"/>
    <property type="match status" value="1"/>
</dbReference>
<dbReference type="PROSITE" id="PS00301">
    <property type="entry name" value="G_TR_1"/>
    <property type="match status" value="1"/>
</dbReference>
<dbReference type="PROSITE" id="PS51722">
    <property type="entry name" value="G_TR_2"/>
    <property type="match status" value="1"/>
</dbReference>
<sequence>MAKAKFERSKPHVNIGTIGHVDHGKTTLTAAITTVLAKAGGAEARGYDQIDAAPEERERGITISTAHVEYETETRHYAHVDCPGHADYVKNMITGAAQMDGGILVVSAADGPMPQTREHILLSRQVGVPYIVVFLNKCDMVDDEELLELVEMEVRDLLSEYGFPGDDIPVIKGSALKALQGEADWEAKIIELMAEVDAYIPTPERETDKPFLMPVEDVFSITGRGTVATGRVERGIVKVGDVVEIIGLAEENASTTVTGVEMFRKLLDQAQAGDNIGALLRGVAREDIQRGQVLAKSGSVKAHAKFKAEVFVLSKEEGGRHTPFFANYRPQFYFRTTDVTGIIQLPEGTEMVMPGDNIEMTIELIAPIAIEEGTKFSIREGGRTVGYGVVATIVE</sequence>
<proteinExistence type="inferred from homology"/>
<comment type="function">
    <text evidence="2">GTP hydrolase that promotes the GTP-dependent binding of aminoacyl-tRNA to the A-site of ribosomes during protein biosynthesis.</text>
</comment>
<comment type="catalytic activity">
    <reaction evidence="2">
        <text>GTP + H2O = GDP + phosphate + H(+)</text>
        <dbReference type="Rhea" id="RHEA:19669"/>
        <dbReference type="ChEBI" id="CHEBI:15377"/>
        <dbReference type="ChEBI" id="CHEBI:15378"/>
        <dbReference type="ChEBI" id="CHEBI:37565"/>
        <dbReference type="ChEBI" id="CHEBI:43474"/>
        <dbReference type="ChEBI" id="CHEBI:58189"/>
        <dbReference type="EC" id="3.6.5.3"/>
    </reaction>
    <physiologicalReaction direction="left-to-right" evidence="2">
        <dbReference type="Rhea" id="RHEA:19670"/>
    </physiologicalReaction>
</comment>
<comment type="subunit">
    <text evidence="2">Monomer.</text>
</comment>
<comment type="subcellular location">
    <subcellularLocation>
        <location evidence="2">Cytoplasm</location>
    </subcellularLocation>
</comment>
<comment type="similarity">
    <text evidence="2">Belongs to the TRAFAC class translation factor GTPase superfamily. Classic translation factor GTPase family. EF-Tu/EF-1A subfamily.</text>
</comment>